<feature type="chain" id="PRO_0000272636" description="Protein translocase subunit SecD">
    <location>
        <begin position="1"/>
        <end position="518"/>
    </location>
</feature>
<feature type="transmembrane region" description="Helical" evidence="1">
    <location>
        <begin position="9"/>
        <end position="29"/>
    </location>
</feature>
<feature type="transmembrane region" description="Helical" evidence="1">
    <location>
        <begin position="356"/>
        <end position="376"/>
    </location>
</feature>
<feature type="transmembrane region" description="Helical" evidence="1">
    <location>
        <begin position="377"/>
        <end position="397"/>
    </location>
</feature>
<feature type="transmembrane region" description="Helical" evidence="1">
    <location>
        <begin position="406"/>
        <end position="426"/>
    </location>
</feature>
<feature type="transmembrane region" description="Helical" evidence="1">
    <location>
        <begin position="451"/>
        <end position="473"/>
    </location>
</feature>
<feature type="transmembrane region" description="Helical" evidence="1">
    <location>
        <begin position="486"/>
        <end position="506"/>
    </location>
</feature>
<comment type="function">
    <text evidence="1">Part of the Sec protein translocase complex. Interacts with the SecYEG preprotein conducting channel. SecDF uses the proton motive force (PMF) to complete protein translocation after the ATP-dependent function of SecA.</text>
</comment>
<comment type="subunit">
    <text evidence="1">Forms a complex with SecF. Part of the essential Sec protein translocation apparatus which comprises SecA, SecYEG and auxiliary proteins SecDF-YajC and YidC.</text>
</comment>
<comment type="subcellular location">
    <subcellularLocation>
        <location evidence="1">Cell inner membrane</location>
        <topology evidence="1">Multi-pass membrane protein</topology>
    </subcellularLocation>
</comment>
<comment type="similarity">
    <text evidence="1">Belongs to the SecD/SecF family. SecD subfamily.</text>
</comment>
<reference key="1">
    <citation type="journal article" date="2004" name="J. Bacteriol.">
        <title>Complete genome sequence of Rickettsia typhi and comparison with sequences of other Rickettsiae.</title>
        <authorList>
            <person name="McLeod M.P."/>
            <person name="Qin X."/>
            <person name="Karpathy S.E."/>
            <person name="Gioia J."/>
            <person name="Highlander S.K."/>
            <person name="Fox G.E."/>
            <person name="McNeill T.Z."/>
            <person name="Jiang H."/>
            <person name="Muzny D."/>
            <person name="Jacob L.S."/>
            <person name="Hawes A.C."/>
            <person name="Sodergren E."/>
            <person name="Gill R."/>
            <person name="Hume J."/>
            <person name="Morgan M."/>
            <person name="Fan G."/>
            <person name="Amin A.G."/>
            <person name="Gibbs R.A."/>
            <person name="Hong C."/>
            <person name="Yu X.-J."/>
            <person name="Walker D.H."/>
            <person name="Weinstock G.M."/>
        </authorList>
    </citation>
    <scope>NUCLEOTIDE SEQUENCE [LARGE SCALE GENOMIC DNA]</scope>
    <source>
        <strain>ATCC VR-144 / Wilmington</strain>
    </source>
</reference>
<proteinExistence type="inferred from homology"/>
<gene>
    <name evidence="1" type="primary">secD</name>
    <name type="ordered locus">RT0575</name>
</gene>
<dbReference type="EMBL" id="AE017197">
    <property type="protein sequence ID" value="AAU04040.1"/>
    <property type="molecule type" value="Genomic_DNA"/>
</dbReference>
<dbReference type="RefSeq" id="WP_011191021.1">
    <property type="nucleotide sequence ID" value="NC_006142.1"/>
</dbReference>
<dbReference type="SMR" id="Q68WF2"/>
<dbReference type="KEGG" id="rty:RT0575"/>
<dbReference type="eggNOG" id="COG0342">
    <property type="taxonomic scope" value="Bacteria"/>
</dbReference>
<dbReference type="HOGENOM" id="CLU_007894_4_3_5"/>
<dbReference type="OrthoDB" id="9805019at2"/>
<dbReference type="Proteomes" id="UP000000604">
    <property type="component" value="Chromosome"/>
</dbReference>
<dbReference type="GO" id="GO:0005886">
    <property type="term" value="C:plasma membrane"/>
    <property type="evidence" value="ECO:0007669"/>
    <property type="project" value="UniProtKB-SubCell"/>
</dbReference>
<dbReference type="GO" id="GO:0015450">
    <property type="term" value="F:protein-transporting ATPase activity"/>
    <property type="evidence" value="ECO:0007669"/>
    <property type="project" value="InterPro"/>
</dbReference>
<dbReference type="GO" id="GO:0065002">
    <property type="term" value="P:intracellular protein transmembrane transport"/>
    <property type="evidence" value="ECO:0007669"/>
    <property type="project" value="UniProtKB-UniRule"/>
</dbReference>
<dbReference type="GO" id="GO:0006605">
    <property type="term" value="P:protein targeting"/>
    <property type="evidence" value="ECO:0007669"/>
    <property type="project" value="UniProtKB-UniRule"/>
</dbReference>
<dbReference type="GO" id="GO:0043952">
    <property type="term" value="P:protein transport by the Sec complex"/>
    <property type="evidence" value="ECO:0007669"/>
    <property type="project" value="UniProtKB-UniRule"/>
</dbReference>
<dbReference type="FunFam" id="3.30.1360.200:FF:000002">
    <property type="entry name" value="Preprotein translocase subunit SecD"/>
    <property type="match status" value="1"/>
</dbReference>
<dbReference type="FunFam" id="1.20.1640.10:FF:000004">
    <property type="entry name" value="Protein translocase subunit SecD"/>
    <property type="match status" value="1"/>
</dbReference>
<dbReference type="Gene3D" id="3.30.1360.200">
    <property type="match status" value="1"/>
</dbReference>
<dbReference type="Gene3D" id="3.30.70.3400">
    <property type="match status" value="2"/>
</dbReference>
<dbReference type="Gene3D" id="1.20.1640.10">
    <property type="entry name" value="Multidrug efflux transporter AcrB transmembrane domain"/>
    <property type="match status" value="1"/>
</dbReference>
<dbReference type="HAMAP" id="MF_01463_B">
    <property type="entry name" value="SecD_B"/>
    <property type="match status" value="1"/>
</dbReference>
<dbReference type="InterPro" id="IPR005791">
    <property type="entry name" value="SecD"/>
</dbReference>
<dbReference type="InterPro" id="IPR022813">
    <property type="entry name" value="SecD/SecF_arch_bac"/>
</dbReference>
<dbReference type="InterPro" id="IPR048631">
    <property type="entry name" value="SecD_1st"/>
</dbReference>
<dbReference type="InterPro" id="IPR048634">
    <property type="entry name" value="SecD_SecF_C"/>
</dbReference>
<dbReference type="InterPro" id="IPR055344">
    <property type="entry name" value="SecD_SecF_C_bact"/>
</dbReference>
<dbReference type="InterPro" id="IPR054384">
    <property type="entry name" value="SecDF_P1_head"/>
</dbReference>
<dbReference type="NCBIfam" id="TIGR00916">
    <property type="entry name" value="2A0604s01"/>
    <property type="match status" value="1"/>
</dbReference>
<dbReference type="NCBIfam" id="TIGR01129">
    <property type="entry name" value="secD"/>
    <property type="match status" value="1"/>
</dbReference>
<dbReference type="PANTHER" id="PTHR30081:SF1">
    <property type="entry name" value="PROTEIN TRANSLOCASE SUBUNIT SECD"/>
    <property type="match status" value="1"/>
</dbReference>
<dbReference type="PANTHER" id="PTHR30081">
    <property type="entry name" value="PROTEIN-EXPORT MEMBRANE PROTEIN SEC"/>
    <property type="match status" value="1"/>
</dbReference>
<dbReference type="Pfam" id="PF21760">
    <property type="entry name" value="SecD_1st"/>
    <property type="match status" value="1"/>
</dbReference>
<dbReference type="Pfam" id="PF02355">
    <property type="entry name" value="SecD_SecF_C"/>
    <property type="match status" value="1"/>
</dbReference>
<dbReference type="Pfam" id="PF22599">
    <property type="entry name" value="SecDF_P1_head"/>
    <property type="match status" value="1"/>
</dbReference>
<dbReference type="SUPFAM" id="SSF82866">
    <property type="entry name" value="Multidrug efflux transporter AcrB transmembrane domain"/>
    <property type="match status" value="1"/>
</dbReference>
<protein>
    <recommendedName>
        <fullName evidence="1">Protein translocase subunit SecD</fullName>
    </recommendedName>
</protein>
<keyword id="KW-0997">Cell inner membrane</keyword>
<keyword id="KW-1003">Cell membrane</keyword>
<keyword id="KW-0472">Membrane</keyword>
<keyword id="KW-0653">Protein transport</keyword>
<keyword id="KW-0811">Translocation</keyword>
<keyword id="KW-0812">Transmembrane</keyword>
<keyword id="KW-1133">Transmembrane helix</keyword>
<keyword id="KW-0813">Transport</keyword>
<sequence>MQNLPKWKIVLSIICTVFAIICALPNFIQINWKFLPHDSVNLGLDLRGGANLLLDVDFDTYLNDSMENIADTLRKNFREHKIGYKNLLVRHNNIQLEVRSTEVLKSLKKIIHKIDPEIIIEVNKNKIKLRYSESRLNDLLNKVVEQSIEIVRMRIDSTGTKEPILQRQGNKHILLQVPGVDNPSYLKNILGKTAKLTFHLVDENANIEEAIKGHIPLDSMLIKGDSEHHGEYYIVIKKKVLLSGTHLTKASASFDQNSQPMVAFSFNNLGSKIFTEITKNNTGKRLAIVLDNKLLSAPMINGAIIGGDGIITGNFTIESANELALLLRVGSLPTPLKIIEERSIGPNLGADSIESGKKAGLIGFTAVCIFMILSYGVIGLFANIALILALLYILALLSLFQATLTLPGIAGIILTMGMAVDANVLIYERIKEELHKGVSNLYAIRTGFESAFATIIDSNLTTLIVAFALYIFGVGAIKGFAVALTIGIISSMFSAIIITKLLIDIWVKYFKPEKLGLL</sequence>
<accession>Q68WF2</accession>
<name>SECD_RICTY</name>
<evidence type="ECO:0000255" key="1">
    <source>
        <dbReference type="HAMAP-Rule" id="MF_01463"/>
    </source>
</evidence>
<organism>
    <name type="scientific">Rickettsia typhi (strain ATCC VR-144 / Wilmington)</name>
    <dbReference type="NCBI Taxonomy" id="257363"/>
    <lineage>
        <taxon>Bacteria</taxon>
        <taxon>Pseudomonadati</taxon>
        <taxon>Pseudomonadota</taxon>
        <taxon>Alphaproteobacteria</taxon>
        <taxon>Rickettsiales</taxon>
        <taxon>Rickettsiaceae</taxon>
        <taxon>Rickettsieae</taxon>
        <taxon>Rickettsia</taxon>
        <taxon>typhus group</taxon>
    </lineage>
</organism>